<evidence type="ECO:0000255" key="1">
    <source>
        <dbReference type="HAMAP-Rule" id="MF_00175"/>
    </source>
</evidence>
<evidence type="ECO:0000255" key="2">
    <source>
        <dbReference type="PROSITE-ProRule" id="PRU01250"/>
    </source>
</evidence>
<proteinExistence type="inferred from homology"/>
<sequence length="427" mass="46868">MTDTRNGEDSGKLLYCSFCGKSQHEVRKLIAGPSVFICDECVDLCNDIIREEVQEAQAESSAHKLPSPKEISGILDQYVIGQERAKKVLAVAVYNHYKRLNQRDKKGDEVELGKSNILLIGPTGSGKTLLAETLARLLNVPFTIADATTLTEAGYVGEDVENIIQKLLQKCDYDVEKAQMGIVYIDEIDKISRKSDNPSITRDVSGEGVQQALLKLIEGTVASVPPQGGRKHPQQEFLQVDTRNILFICGGAFSGLEKVIQNRSTKGGIGFGAEVRSKEEGKKVGESLREVEPDDLVKFGLIPEFVGRLPVLATLDELDEAALMQILTEPKNALTKQYAKLFEMESVDLEFRSDALKAVARKALERKTGARGLRSILEGVLLDTMYEIPSKKDVSKVVIDESVIEGTSQPLMIYENSEPQAKAAPDA</sequence>
<dbReference type="EMBL" id="CP000712">
    <property type="protein sequence ID" value="ABQ79594.1"/>
    <property type="molecule type" value="Genomic_DNA"/>
</dbReference>
<dbReference type="SMR" id="A5W634"/>
<dbReference type="KEGG" id="ppf:Pput_3468"/>
<dbReference type="eggNOG" id="COG1219">
    <property type="taxonomic scope" value="Bacteria"/>
</dbReference>
<dbReference type="HOGENOM" id="CLU_014218_8_2_6"/>
<dbReference type="GO" id="GO:0009376">
    <property type="term" value="C:HslUV protease complex"/>
    <property type="evidence" value="ECO:0007669"/>
    <property type="project" value="TreeGrafter"/>
</dbReference>
<dbReference type="GO" id="GO:0005524">
    <property type="term" value="F:ATP binding"/>
    <property type="evidence" value="ECO:0007669"/>
    <property type="project" value="UniProtKB-UniRule"/>
</dbReference>
<dbReference type="GO" id="GO:0016887">
    <property type="term" value="F:ATP hydrolysis activity"/>
    <property type="evidence" value="ECO:0007669"/>
    <property type="project" value="InterPro"/>
</dbReference>
<dbReference type="GO" id="GO:0140662">
    <property type="term" value="F:ATP-dependent protein folding chaperone"/>
    <property type="evidence" value="ECO:0007669"/>
    <property type="project" value="InterPro"/>
</dbReference>
<dbReference type="GO" id="GO:0046983">
    <property type="term" value="F:protein dimerization activity"/>
    <property type="evidence" value="ECO:0007669"/>
    <property type="project" value="InterPro"/>
</dbReference>
<dbReference type="GO" id="GO:0051082">
    <property type="term" value="F:unfolded protein binding"/>
    <property type="evidence" value="ECO:0007669"/>
    <property type="project" value="UniProtKB-UniRule"/>
</dbReference>
<dbReference type="GO" id="GO:0008270">
    <property type="term" value="F:zinc ion binding"/>
    <property type="evidence" value="ECO:0007669"/>
    <property type="project" value="InterPro"/>
</dbReference>
<dbReference type="GO" id="GO:0051301">
    <property type="term" value="P:cell division"/>
    <property type="evidence" value="ECO:0007669"/>
    <property type="project" value="TreeGrafter"/>
</dbReference>
<dbReference type="GO" id="GO:0051603">
    <property type="term" value="P:proteolysis involved in protein catabolic process"/>
    <property type="evidence" value="ECO:0007669"/>
    <property type="project" value="TreeGrafter"/>
</dbReference>
<dbReference type="CDD" id="cd19497">
    <property type="entry name" value="RecA-like_ClpX"/>
    <property type="match status" value="1"/>
</dbReference>
<dbReference type="FunFam" id="1.10.8.60:FF:000002">
    <property type="entry name" value="ATP-dependent Clp protease ATP-binding subunit ClpX"/>
    <property type="match status" value="1"/>
</dbReference>
<dbReference type="FunFam" id="3.40.50.300:FF:000005">
    <property type="entry name" value="ATP-dependent Clp protease ATP-binding subunit ClpX"/>
    <property type="match status" value="1"/>
</dbReference>
<dbReference type="Gene3D" id="1.10.8.60">
    <property type="match status" value="1"/>
</dbReference>
<dbReference type="Gene3D" id="6.20.220.10">
    <property type="entry name" value="ClpX chaperone, C4-type zinc finger domain"/>
    <property type="match status" value="1"/>
</dbReference>
<dbReference type="Gene3D" id="3.40.50.300">
    <property type="entry name" value="P-loop containing nucleotide triphosphate hydrolases"/>
    <property type="match status" value="1"/>
</dbReference>
<dbReference type="HAMAP" id="MF_00175">
    <property type="entry name" value="ClpX"/>
    <property type="match status" value="1"/>
</dbReference>
<dbReference type="InterPro" id="IPR003593">
    <property type="entry name" value="AAA+_ATPase"/>
</dbReference>
<dbReference type="InterPro" id="IPR050052">
    <property type="entry name" value="ATP-dep_Clp_protease_ClpX"/>
</dbReference>
<dbReference type="InterPro" id="IPR003959">
    <property type="entry name" value="ATPase_AAA_core"/>
</dbReference>
<dbReference type="InterPro" id="IPR019489">
    <property type="entry name" value="Clp_ATPase_C"/>
</dbReference>
<dbReference type="InterPro" id="IPR004487">
    <property type="entry name" value="Clp_protease_ATP-bd_su_ClpX"/>
</dbReference>
<dbReference type="InterPro" id="IPR046425">
    <property type="entry name" value="ClpX_bact"/>
</dbReference>
<dbReference type="InterPro" id="IPR027417">
    <property type="entry name" value="P-loop_NTPase"/>
</dbReference>
<dbReference type="InterPro" id="IPR010603">
    <property type="entry name" value="Znf_CppX_C4"/>
</dbReference>
<dbReference type="InterPro" id="IPR038366">
    <property type="entry name" value="Znf_CppX_C4_sf"/>
</dbReference>
<dbReference type="NCBIfam" id="TIGR00382">
    <property type="entry name" value="clpX"/>
    <property type="match status" value="1"/>
</dbReference>
<dbReference type="NCBIfam" id="NF003745">
    <property type="entry name" value="PRK05342.1"/>
    <property type="match status" value="1"/>
</dbReference>
<dbReference type="PANTHER" id="PTHR48102:SF7">
    <property type="entry name" value="ATP-DEPENDENT CLP PROTEASE ATP-BINDING SUBUNIT CLPX-LIKE, MITOCHONDRIAL"/>
    <property type="match status" value="1"/>
</dbReference>
<dbReference type="PANTHER" id="PTHR48102">
    <property type="entry name" value="ATP-DEPENDENT CLP PROTEASE ATP-BINDING SUBUNIT CLPX-LIKE, MITOCHONDRIAL-RELATED"/>
    <property type="match status" value="1"/>
</dbReference>
<dbReference type="Pfam" id="PF07724">
    <property type="entry name" value="AAA_2"/>
    <property type="match status" value="1"/>
</dbReference>
<dbReference type="Pfam" id="PF10431">
    <property type="entry name" value="ClpB_D2-small"/>
    <property type="match status" value="1"/>
</dbReference>
<dbReference type="Pfam" id="PF06689">
    <property type="entry name" value="zf-C4_ClpX"/>
    <property type="match status" value="1"/>
</dbReference>
<dbReference type="SMART" id="SM00382">
    <property type="entry name" value="AAA"/>
    <property type="match status" value="1"/>
</dbReference>
<dbReference type="SMART" id="SM01086">
    <property type="entry name" value="ClpB_D2-small"/>
    <property type="match status" value="1"/>
</dbReference>
<dbReference type="SMART" id="SM00994">
    <property type="entry name" value="zf-C4_ClpX"/>
    <property type="match status" value="1"/>
</dbReference>
<dbReference type="SUPFAM" id="SSF57716">
    <property type="entry name" value="Glucocorticoid receptor-like (DNA-binding domain)"/>
    <property type="match status" value="1"/>
</dbReference>
<dbReference type="SUPFAM" id="SSF52540">
    <property type="entry name" value="P-loop containing nucleoside triphosphate hydrolases"/>
    <property type="match status" value="1"/>
</dbReference>
<dbReference type="PROSITE" id="PS51902">
    <property type="entry name" value="CLPX_ZB"/>
    <property type="match status" value="1"/>
</dbReference>
<organism>
    <name type="scientific">Pseudomonas putida (strain ATCC 700007 / DSM 6899 / JCM 31910 / BCRC 17059 / LMG 24140 / F1)</name>
    <dbReference type="NCBI Taxonomy" id="351746"/>
    <lineage>
        <taxon>Bacteria</taxon>
        <taxon>Pseudomonadati</taxon>
        <taxon>Pseudomonadota</taxon>
        <taxon>Gammaproteobacteria</taxon>
        <taxon>Pseudomonadales</taxon>
        <taxon>Pseudomonadaceae</taxon>
        <taxon>Pseudomonas</taxon>
    </lineage>
</organism>
<accession>A5W634</accession>
<name>CLPX_PSEP1</name>
<feature type="chain" id="PRO_1000024624" description="ATP-dependent Clp protease ATP-binding subunit ClpX">
    <location>
        <begin position="1"/>
        <end position="427"/>
    </location>
</feature>
<feature type="domain" description="ClpX-type ZB" evidence="2">
    <location>
        <begin position="4"/>
        <end position="57"/>
    </location>
</feature>
<feature type="binding site" evidence="2">
    <location>
        <position position="16"/>
    </location>
    <ligand>
        <name>Zn(2+)</name>
        <dbReference type="ChEBI" id="CHEBI:29105"/>
    </ligand>
</feature>
<feature type="binding site" evidence="2">
    <location>
        <position position="19"/>
    </location>
    <ligand>
        <name>Zn(2+)</name>
        <dbReference type="ChEBI" id="CHEBI:29105"/>
    </ligand>
</feature>
<feature type="binding site" evidence="2">
    <location>
        <position position="38"/>
    </location>
    <ligand>
        <name>Zn(2+)</name>
        <dbReference type="ChEBI" id="CHEBI:29105"/>
    </ligand>
</feature>
<feature type="binding site" evidence="2">
    <location>
        <position position="41"/>
    </location>
    <ligand>
        <name>Zn(2+)</name>
        <dbReference type="ChEBI" id="CHEBI:29105"/>
    </ligand>
</feature>
<feature type="binding site" evidence="1">
    <location>
        <begin position="122"/>
        <end position="129"/>
    </location>
    <ligand>
        <name>ATP</name>
        <dbReference type="ChEBI" id="CHEBI:30616"/>
    </ligand>
</feature>
<protein>
    <recommendedName>
        <fullName evidence="1">ATP-dependent Clp protease ATP-binding subunit ClpX</fullName>
    </recommendedName>
</protein>
<reference key="1">
    <citation type="submission" date="2007-05" db="EMBL/GenBank/DDBJ databases">
        <title>Complete sequence of Pseudomonas putida F1.</title>
        <authorList>
            <consortium name="US DOE Joint Genome Institute"/>
            <person name="Copeland A."/>
            <person name="Lucas S."/>
            <person name="Lapidus A."/>
            <person name="Barry K."/>
            <person name="Detter J.C."/>
            <person name="Glavina del Rio T."/>
            <person name="Hammon N."/>
            <person name="Israni S."/>
            <person name="Dalin E."/>
            <person name="Tice H."/>
            <person name="Pitluck S."/>
            <person name="Chain P."/>
            <person name="Malfatti S."/>
            <person name="Shin M."/>
            <person name="Vergez L."/>
            <person name="Schmutz J."/>
            <person name="Larimer F."/>
            <person name="Land M."/>
            <person name="Hauser L."/>
            <person name="Kyrpides N."/>
            <person name="Lykidis A."/>
            <person name="Parales R."/>
            <person name="Richardson P."/>
        </authorList>
    </citation>
    <scope>NUCLEOTIDE SEQUENCE [LARGE SCALE GENOMIC DNA]</scope>
    <source>
        <strain>ATCC 700007 / DSM 6899 / JCM 31910 / BCRC 17059 / LMG 24140 / F1</strain>
    </source>
</reference>
<keyword id="KW-0067">ATP-binding</keyword>
<keyword id="KW-0143">Chaperone</keyword>
<keyword id="KW-0479">Metal-binding</keyword>
<keyword id="KW-0547">Nucleotide-binding</keyword>
<keyword id="KW-0862">Zinc</keyword>
<comment type="function">
    <text evidence="1">ATP-dependent specificity component of the Clp protease. It directs the protease to specific substrates. Can perform chaperone functions in the absence of ClpP.</text>
</comment>
<comment type="subunit">
    <text evidence="1">Component of the ClpX-ClpP complex. Forms a hexameric ring that, in the presence of ATP, binds to fourteen ClpP subunits assembled into a disk-like structure with a central cavity, resembling the structure of eukaryotic proteasomes.</text>
</comment>
<comment type="similarity">
    <text evidence="1">Belongs to the ClpX chaperone family.</text>
</comment>
<gene>
    <name evidence="1" type="primary">clpX</name>
    <name type="ordered locus">Pput_3468</name>
</gene>